<gene>
    <name type="primary">nodM</name>
</gene>
<comment type="function">
    <text>Involved in the production of the root hair deformation (HAD) factor specifically on medicago.</text>
</comment>
<comment type="catalytic activity">
    <reaction>
        <text>D-fructose 6-phosphate + L-glutamine = D-glucosamine 6-phosphate + L-glutamate</text>
        <dbReference type="Rhea" id="RHEA:13237"/>
        <dbReference type="ChEBI" id="CHEBI:29985"/>
        <dbReference type="ChEBI" id="CHEBI:58359"/>
        <dbReference type="ChEBI" id="CHEBI:58725"/>
        <dbReference type="ChEBI" id="CHEBI:61527"/>
        <dbReference type="EC" id="2.6.1.16"/>
    </reaction>
</comment>
<comment type="subcellular location">
    <subcellularLocation>
        <location evidence="1">Cytoplasm</location>
    </subcellularLocation>
</comment>
<proteinExistence type="inferred from homology"/>
<reference key="1">
    <citation type="journal article" date="1988" name="Mol. Microbiol.">
        <title>Characterization of the Rhizobium leguminosarum genes nodLMN involved in efficient host-specific nodulation.</title>
        <authorList>
            <person name="Surin B.P."/>
            <person name="Downie J.A."/>
        </authorList>
    </citation>
    <scope>NUCLEOTIDE SEQUENCE [GENOMIC DNA]</scope>
    <source>
        <strain>248</strain>
    </source>
</reference>
<evidence type="ECO:0000250" key="1"/>
<organism>
    <name type="scientific">Rhizobium leguminosarum bv. viciae</name>
    <dbReference type="NCBI Taxonomy" id="387"/>
    <lineage>
        <taxon>Bacteria</taxon>
        <taxon>Pseudomonadati</taxon>
        <taxon>Pseudomonadota</taxon>
        <taxon>Alphaproteobacteria</taxon>
        <taxon>Hyphomicrobiales</taxon>
        <taxon>Rhizobiaceae</taxon>
        <taxon>Rhizobium/Agrobacterium group</taxon>
        <taxon>Rhizobium</taxon>
    </lineage>
</organism>
<protein>
    <recommendedName>
        <fullName>Glutamine--fructose-6-phosphate aminotransferase [isomerizing]</fullName>
        <shortName>GFAT</shortName>
        <ecNumber>2.6.1.16</ecNumber>
    </recommendedName>
    <alternativeName>
        <fullName>Nodulation protein M</fullName>
    </alternativeName>
</protein>
<keyword id="KW-0032">Aminotransferase</keyword>
<keyword id="KW-0963">Cytoplasm</keyword>
<keyword id="KW-0315">Glutamine amidotransferase</keyword>
<keyword id="KW-0536">Nodulation</keyword>
<keyword id="KW-0614">Plasmid</keyword>
<keyword id="KW-0677">Repeat</keyword>
<keyword id="KW-0808">Transferase</keyword>
<accession>P08633</accession>
<geneLocation type="plasmid">
    <name>sym pRL1JI</name>
</geneLocation>
<name>NODM_RHILV</name>
<dbReference type="EC" id="2.6.1.16"/>
<dbReference type="EMBL" id="Y00548">
    <property type="protein sequence ID" value="CAA68626.1"/>
    <property type="molecule type" value="Genomic_DNA"/>
</dbReference>
<dbReference type="PIR" id="S01040">
    <property type="entry name" value="S01040"/>
</dbReference>
<dbReference type="SMR" id="P08633"/>
<dbReference type="GO" id="GO:0005829">
    <property type="term" value="C:cytosol"/>
    <property type="evidence" value="ECO:0007669"/>
    <property type="project" value="TreeGrafter"/>
</dbReference>
<dbReference type="GO" id="GO:0097367">
    <property type="term" value="F:carbohydrate derivative binding"/>
    <property type="evidence" value="ECO:0007669"/>
    <property type="project" value="InterPro"/>
</dbReference>
<dbReference type="GO" id="GO:0004360">
    <property type="term" value="F:glutamine-fructose-6-phosphate transaminase (isomerizing) activity"/>
    <property type="evidence" value="ECO:0007669"/>
    <property type="project" value="UniProtKB-UniRule"/>
</dbReference>
<dbReference type="GO" id="GO:0005975">
    <property type="term" value="P:carbohydrate metabolic process"/>
    <property type="evidence" value="ECO:0007669"/>
    <property type="project" value="UniProtKB-UniRule"/>
</dbReference>
<dbReference type="GO" id="GO:0006002">
    <property type="term" value="P:fructose 6-phosphate metabolic process"/>
    <property type="evidence" value="ECO:0007669"/>
    <property type="project" value="TreeGrafter"/>
</dbReference>
<dbReference type="GO" id="GO:0006487">
    <property type="term" value="P:protein N-linked glycosylation"/>
    <property type="evidence" value="ECO:0007669"/>
    <property type="project" value="TreeGrafter"/>
</dbReference>
<dbReference type="GO" id="GO:0006047">
    <property type="term" value="P:UDP-N-acetylglucosamine metabolic process"/>
    <property type="evidence" value="ECO:0007669"/>
    <property type="project" value="TreeGrafter"/>
</dbReference>
<dbReference type="CDD" id="cd00714">
    <property type="entry name" value="GFAT"/>
    <property type="match status" value="1"/>
</dbReference>
<dbReference type="CDD" id="cd05008">
    <property type="entry name" value="SIS_GlmS_GlmD_1"/>
    <property type="match status" value="1"/>
</dbReference>
<dbReference type="CDD" id="cd05009">
    <property type="entry name" value="SIS_GlmS_GlmD_2"/>
    <property type="match status" value="1"/>
</dbReference>
<dbReference type="FunFam" id="3.40.50.10490:FF:000001">
    <property type="entry name" value="Glutamine--fructose-6-phosphate aminotransferase [isomerizing]"/>
    <property type="match status" value="1"/>
</dbReference>
<dbReference type="FunFam" id="3.40.50.10490:FF:000002">
    <property type="entry name" value="Glutamine--fructose-6-phosphate aminotransferase [isomerizing]"/>
    <property type="match status" value="1"/>
</dbReference>
<dbReference type="FunFam" id="3.60.20.10:FF:000006">
    <property type="entry name" value="Glutamine--fructose-6-phosphate aminotransferase [isomerizing]"/>
    <property type="match status" value="1"/>
</dbReference>
<dbReference type="Gene3D" id="3.40.50.10490">
    <property type="entry name" value="Glucose-6-phosphate isomerase like protein, domain 1"/>
    <property type="match status" value="2"/>
</dbReference>
<dbReference type="Gene3D" id="3.60.20.10">
    <property type="entry name" value="Glutamine Phosphoribosylpyrophosphate, subunit 1, domain 1"/>
    <property type="match status" value="1"/>
</dbReference>
<dbReference type="HAMAP" id="MF_00164">
    <property type="entry name" value="GlmS"/>
    <property type="match status" value="1"/>
</dbReference>
<dbReference type="InterPro" id="IPR017932">
    <property type="entry name" value="GATase_2_dom"/>
</dbReference>
<dbReference type="InterPro" id="IPR005855">
    <property type="entry name" value="GFAT"/>
</dbReference>
<dbReference type="InterPro" id="IPR047084">
    <property type="entry name" value="GFAT_N"/>
</dbReference>
<dbReference type="InterPro" id="IPR035466">
    <property type="entry name" value="GlmS/AgaS_SIS"/>
</dbReference>
<dbReference type="InterPro" id="IPR035490">
    <property type="entry name" value="GlmS/FrlB_SIS"/>
</dbReference>
<dbReference type="InterPro" id="IPR029055">
    <property type="entry name" value="Ntn_hydrolases_N"/>
</dbReference>
<dbReference type="InterPro" id="IPR001347">
    <property type="entry name" value="SIS_dom"/>
</dbReference>
<dbReference type="InterPro" id="IPR046348">
    <property type="entry name" value="SIS_dom_sf"/>
</dbReference>
<dbReference type="NCBIfam" id="TIGR01135">
    <property type="entry name" value="glmS"/>
    <property type="match status" value="1"/>
</dbReference>
<dbReference type="NCBIfam" id="NF001484">
    <property type="entry name" value="PRK00331.1"/>
    <property type="match status" value="1"/>
</dbReference>
<dbReference type="PANTHER" id="PTHR10937">
    <property type="entry name" value="GLUCOSAMINE--FRUCTOSE-6-PHOSPHATE AMINOTRANSFERASE, ISOMERIZING"/>
    <property type="match status" value="1"/>
</dbReference>
<dbReference type="PANTHER" id="PTHR10937:SF0">
    <property type="entry name" value="GLUTAMINE--FRUCTOSE-6-PHOSPHATE TRANSAMINASE (ISOMERIZING)"/>
    <property type="match status" value="1"/>
</dbReference>
<dbReference type="Pfam" id="PF13522">
    <property type="entry name" value="GATase_6"/>
    <property type="match status" value="1"/>
</dbReference>
<dbReference type="Pfam" id="PF01380">
    <property type="entry name" value="SIS"/>
    <property type="match status" value="2"/>
</dbReference>
<dbReference type="SUPFAM" id="SSF56235">
    <property type="entry name" value="N-terminal nucleophile aminohydrolases (Ntn hydrolases)"/>
    <property type="match status" value="1"/>
</dbReference>
<dbReference type="SUPFAM" id="SSF53697">
    <property type="entry name" value="SIS domain"/>
    <property type="match status" value="1"/>
</dbReference>
<dbReference type="PROSITE" id="PS51278">
    <property type="entry name" value="GATASE_TYPE_2"/>
    <property type="match status" value="1"/>
</dbReference>
<dbReference type="PROSITE" id="PS51464">
    <property type="entry name" value="SIS"/>
    <property type="match status" value="2"/>
</dbReference>
<feature type="initiator methionine" description="Removed" evidence="1">
    <location>
        <position position="1"/>
    </location>
</feature>
<feature type="chain" id="PRO_0000135436" description="Glutamine--fructose-6-phosphate aminotransferase [isomerizing]">
    <location>
        <begin position="2"/>
        <end position="608"/>
    </location>
</feature>
<feature type="domain" description="Glutamine amidotransferase type-2">
    <location>
        <begin position="2"/>
        <end position="217"/>
    </location>
</feature>
<feature type="domain" description="SIS 1">
    <location>
        <begin position="283"/>
        <end position="422"/>
    </location>
</feature>
<feature type="domain" description="SIS 2">
    <location>
        <begin position="456"/>
        <end position="598"/>
    </location>
</feature>
<feature type="active site" description="Nucleophile; for GATase activity" evidence="1">
    <location>
        <position position="2"/>
    </location>
</feature>
<feature type="active site" description="For Fru-6P isomerization activity" evidence="1">
    <location>
        <position position="603"/>
    </location>
</feature>
<sequence>MCGIVGIVGHKPVSERLIEALGRLEYRGYDSSGVATIFEGELHRRRAEGKLGNLKTRLKEAPLSGTVGIAHTRWATHGAPTECNAHPHFTDGVAVVHNGIIENFSKLKDALAEVGTKFQTDTDTEVIAHLLTKFRRDGMGCLEAMHAMLKCVEGAFALAILFEDDPATIMVARNGPPLVIGHGDGEMFLGSDAIALAPFTNDITYLNDGDWAVVGKTSVQVFDIEGNVVTRPRHISLATADLVGKGNHPHFMEKEIYEQPEVIARALGHYINVNDSHVTTTSTDIDFAGVESLAISACGTAYLAGLIGKYWFERYARLIVEIDVASEFRYREIPLSPRSAALFISQSGETADTLASLRYCKAHGLRIGAVVNTRESTMAREADAIFPILAGPEIGVASTKAFTCQLAVLAALRIGAGKARGTITDDEEQVLVQSLATLPGVMRQVLNDITPEIELLSRELSHYRDVLYLGRGTSFPLAMEGALKLKEVSYIHAEGYAAGELKHGPIALIDENMPVIVIAPHDRFFDKTVSNMQEVAARGGRIILITDETGASMSKLPTMHTIVLPDVAEIIAPMIFSLPLQLLAYHTAVVMGADVDQPRNLAKSVTVE</sequence>